<protein>
    <recommendedName>
        <fullName>Phosphoserine phosphatase</fullName>
        <shortName>PSP</shortName>
        <shortName>PSPase</shortName>
        <ecNumber evidence="2 3">3.1.3.3</ecNumber>
    </recommendedName>
    <alternativeName>
        <fullName>O-phosphoserine phosphohydrolase</fullName>
    </alternativeName>
</protein>
<reference key="1">
    <citation type="journal article" date="1996" name="Science">
        <title>Complete genome sequence of the methanogenic archaeon, Methanococcus jannaschii.</title>
        <authorList>
            <person name="Bult C.J."/>
            <person name="White O."/>
            <person name="Olsen G.J."/>
            <person name="Zhou L."/>
            <person name="Fleischmann R.D."/>
            <person name="Sutton G.G."/>
            <person name="Blake J.A."/>
            <person name="FitzGerald L.M."/>
            <person name="Clayton R.A."/>
            <person name="Gocayne J.D."/>
            <person name="Kerlavage A.R."/>
            <person name="Dougherty B.A."/>
            <person name="Tomb J.-F."/>
            <person name="Adams M.D."/>
            <person name="Reich C.I."/>
            <person name="Overbeek R."/>
            <person name="Kirkness E.F."/>
            <person name="Weinstock K.G."/>
            <person name="Merrick J.M."/>
            <person name="Glodek A."/>
            <person name="Scott J.L."/>
            <person name="Geoghagen N.S.M."/>
            <person name="Weidman J.F."/>
            <person name="Fuhrmann J.L."/>
            <person name="Nguyen D."/>
            <person name="Utterback T.R."/>
            <person name="Kelley J.M."/>
            <person name="Peterson J.D."/>
            <person name="Sadow P.W."/>
            <person name="Hanna M.C."/>
            <person name="Cotton M.D."/>
            <person name="Roberts K.M."/>
            <person name="Hurst M.A."/>
            <person name="Kaine B.P."/>
            <person name="Borodovsky M."/>
            <person name="Klenk H.-P."/>
            <person name="Fraser C.M."/>
            <person name="Smith H.O."/>
            <person name="Woese C.R."/>
            <person name="Venter J.C."/>
        </authorList>
    </citation>
    <scope>NUCLEOTIDE SEQUENCE [LARGE SCALE GENOMIC DNA]</scope>
    <source>
        <strain>ATCC 43067 / DSM 2661 / JAL-1 / JCM 10045 / NBRC 100440</strain>
    </source>
</reference>
<reference key="2">
    <citation type="journal article" date="2001" name="Proc. Natl. Acad. Sci. U.S.A.">
        <title>BeF(3)(-) acts as a phosphate analog in proteins phosphorylated on aspartate: structure of a BeF(3)(-) complex with phosphoserine phosphatase.</title>
        <authorList>
            <person name="Cho H."/>
            <person name="Wang W."/>
            <person name="Kim R."/>
            <person name="Yokota H."/>
            <person name="Damo S."/>
            <person name="Kim S.H."/>
            <person name="Wemmer D."/>
            <person name="Kustu S."/>
            <person name="Yan D."/>
        </authorList>
    </citation>
    <scope>X-RAY CRYSTALLOGRAPHY (1.5 ANGSTROMS) IN COMPLEX WITH BEF3 AND MAGNESIUM ION</scope>
    <scope>CATALYTIC ACTIVITY</scope>
    <scope>ACTIVE SITE</scope>
</reference>
<reference key="3">
    <citation type="journal article" date="2001" name="Structure">
        <title>Crystal structure of phosphoserine phosphatase from Methanococcus jannaschii, a hyperthermophile, at 1.8 A resolution.</title>
        <authorList>
            <person name="Wang W."/>
            <person name="Kim R."/>
            <person name="Jancarik J."/>
            <person name="Yokota H."/>
            <person name="Kim S.-H."/>
        </authorList>
    </citation>
    <scope>X-RAY CRYSTALLOGRAPHY (1.8 ANGSTROMS) IN COMPLEX WITH MAGNESIUM IONS AND PHOSPHATE</scope>
    <scope>ACTIVE SITE</scope>
</reference>
<reference key="4">
    <citation type="journal article" date="2002" name="J. Mol. Biol.">
        <title>Structural characterization of the reaction pathway in phosphoserine phosphatase: crystallographic 'snapshots' of intermediate states.</title>
        <authorList>
            <person name="Wang W."/>
            <person name="Cho H.S."/>
            <person name="Kim R."/>
            <person name="Jancarik J."/>
            <person name="Yokota H."/>
            <person name="Nguyen H.H."/>
            <person name="Grigoriev I.V."/>
            <person name="Wemmer D.E."/>
            <person name="Kim S.-H."/>
        </authorList>
    </citation>
    <scope>X-RAY CRYSTALLOGRAPHY (1.48 ANGSTROMS) IN COMPLEXES WITH MAGNESIUM; SUBSTRATE; PHOSPHATE AND TRANSITION STATE ANALOG</scope>
    <scope>CATALYTIC ACTIVITY</scope>
    <scope>BIOPHYSICOCHEMICAL PROPERTIES</scope>
    <scope>ENZYME MECHANISM</scope>
    <scope>COFACTOR</scope>
    <scope>ACTIVE SITE</scope>
    <scope>MUTAGENESIS OF ASP-11</scope>
</reference>
<feature type="chain" id="PRO_0000156891" description="Phosphoserine phosphatase">
    <location>
        <begin position="1"/>
        <end position="211"/>
    </location>
</feature>
<feature type="active site" description="Nucleophile" evidence="1 2 3">
    <location>
        <position position="11"/>
    </location>
</feature>
<feature type="active site" description="Proton donor" evidence="1 2 3">
    <location>
        <position position="13"/>
    </location>
</feature>
<feature type="binding site" evidence="1 2 3">
    <location>
        <position position="11"/>
    </location>
    <ligand>
        <name>Mg(2+)</name>
        <dbReference type="ChEBI" id="CHEBI:18420"/>
    </ligand>
</feature>
<feature type="binding site" evidence="1 2 3">
    <location>
        <position position="13"/>
    </location>
    <ligand>
        <name>Mg(2+)</name>
        <dbReference type="ChEBI" id="CHEBI:18420"/>
    </ligand>
</feature>
<feature type="binding site" evidence="1 2 3">
    <location>
        <position position="20"/>
    </location>
    <ligand>
        <name>substrate</name>
    </ligand>
</feature>
<feature type="binding site" evidence="1 2 3">
    <location>
        <position position="56"/>
    </location>
    <ligand>
        <name>substrate</name>
    </ligand>
</feature>
<feature type="binding site" evidence="1 2 3">
    <location>
        <begin position="99"/>
        <end position="100"/>
    </location>
    <ligand>
        <name>substrate</name>
    </ligand>
</feature>
<feature type="binding site" evidence="1 2 3">
    <location>
        <position position="144"/>
    </location>
    <ligand>
        <name>substrate</name>
    </ligand>
</feature>
<feature type="binding site" evidence="1 2 3">
    <location>
        <position position="167"/>
    </location>
    <ligand>
        <name>Mg(2+)</name>
        <dbReference type="ChEBI" id="CHEBI:18420"/>
    </ligand>
</feature>
<feature type="binding site" evidence="3">
    <location>
        <position position="170"/>
    </location>
    <ligand>
        <name>substrate</name>
    </ligand>
</feature>
<feature type="mutagenesis site" description="Loss of activity." evidence="3">
    <original>D</original>
    <variation>N</variation>
    <location>
        <position position="11"/>
    </location>
</feature>
<feature type="strand" evidence="5">
    <location>
        <begin position="6"/>
        <end position="11"/>
    </location>
</feature>
<feature type="helix" evidence="5">
    <location>
        <begin position="12"/>
        <end position="16"/>
    </location>
</feature>
<feature type="strand" evidence="5">
    <location>
        <begin position="17"/>
        <end position="19"/>
    </location>
</feature>
<feature type="helix" evidence="5">
    <location>
        <begin position="21"/>
        <end position="28"/>
    </location>
</feature>
<feature type="helix" evidence="5">
    <location>
        <begin position="32"/>
        <end position="43"/>
    </location>
</feature>
<feature type="helix" evidence="5">
    <location>
        <begin position="49"/>
        <end position="58"/>
    </location>
</feature>
<feature type="turn" evidence="5">
    <location>
        <begin position="59"/>
        <end position="62"/>
    </location>
</feature>
<feature type="helix" evidence="5">
    <location>
        <begin position="65"/>
        <end position="73"/>
    </location>
</feature>
<feature type="helix" evidence="5">
    <location>
        <begin position="81"/>
        <end position="90"/>
    </location>
</feature>
<feature type="strand" evidence="5">
    <location>
        <begin position="93"/>
        <end position="102"/>
    </location>
</feature>
<feature type="helix" evidence="5">
    <location>
        <begin position="103"/>
        <end position="113"/>
    </location>
</feature>
<feature type="strand" evidence="5">
    <location>
        <begin position="116"/>
        <end position="126"/>
    </location>
</feature>
<feature type="strand" evidence="5">
    <location>
        <begin position="129"/>
        <end position="135"/>
    </location>
</feature>
<feature type="helix" evidence="5">
    <location>
        <begin position="143"/>
        <end position="155"/>
    </location>
</feature>
<feature type="helix" evidence="5">
    <location>
        <begin position="159"/>
        <end position="161"/>
    </location>
</feature>
<feature type="strand" evidence="5">
    <location>
        <begin position="162"/>
        <end position="166"/>
    </location>
</feature>
<feature type="helix" evidence="5">
    <location>
        <begin position="169"/>
        <end position="171"/>
    </location>
</feature>
<feature type="helix" evidence="5">
    <location>
        <begin position="172"/>
        <end position="177"/>
    </location>
</feature>
<feature type="strand" evidence="5">
    <location>
        <begin position="179"/>
        <end position="185"/>
    </location>
</feature>
<feature type="helix" evidence="5">
    <location>
        <begin position="188"/>
        <end position="191"/>
    </location>
</feature>
<feature type="strand" evidence="5">
    <location>
        <begin position="195"/>
        <end position="198"/>
    </location>
</feature>
<feature type="helix" evidence="5">
    <location>
        <begin position="203"/>
        <end position="209"/>
    </location>
</feature>
<evidence type="ECO:0000269" key="1">
    <source>
    </source>
</evidence>
<evidence type="ECO:0000269" key="2">
    <source>
    </source>
</evidence>
<evidence type="ECO:0000269" key="3">
    <source>
    </source>
</evidence>
<evidence type="ECO:0000305" key="4"/>
<evidence type="ECO:0007829" key="5">
    <source>
        <dbReference type="PDB" id="1L7M"/>
    </source>
</evidence>
<proteinExistence type="evidence at protein level"/>
<comment type="catalytic activity">
    <reaction evidence="2 3">
        <text>O-phospho-L-serine + H2O = L-serine + phosphate</text>
        <dbReference type="Rhea" id="RHEA:21208"/>
        <dbReference type="ChEBI" id="CHEBI:15377"/>
        <dbReference type="ChEBI" id="CHEBI:33384"/>
        <dbReference type="ChEBI" id="CHEBI:43474"/>
        <dbReference type="ChEBI" id="CHEBI:57524"/>
        <dbReference type="EC" id="3.1.3.3"/>
    </reaction>
</comment>
<comment type="catalytic activity">
    <reaction evidence="2 3">
        <text>O-phospho-D-serine + H2O = D-serine + phosphate</text>
        <dbReference type="Rhea" id="RHEA:24873"/>
        <dbReference type="ChEBI" id="CHEBI:15377"/>
        <dbReference type="ChEBI" id="CHEBI:35247"/>
        <dbReference type="ChEBI" id="CHEBI:43474"/>
        <dbReference type="ChEBI" id="CHEBI:58680"/>
        <dbReference type="EC" id="3.1.3.3"/>
    </reaction>
</comment>
<comment type="cofactor">
    <cofactor evidence="3">
        <name>Mg(2+)</name>
        <dbReference type="ChEBI" id="CHEBI:18420"/>
    </cofactor>
    <text evidence="3">Binds 1 Mg(2+) ion per subunit.</text>
</comment>
<comment type="biophysicochemical properties">
    <kinetics>
        <KM evidence="3">620 uM for O-phospho-L-serine (at 70 degrees Celsius and at pH 7.5)</KM>
    </kinetics>
    <phDependence>
        <text evidence="3">Optimum pH is 7.5.</text>
    </phDependence>
    <temperatureDependence>
        <text evidence="3">Optimum temperature is 70 degrees Celsius.</text>
    </temperatureDependence>
</comment>
<comment type="pathway">
    <text>Amino-acid biosynthesis; L-serine biosynthesis; L-serine from 3-phospho-D-glycerate: step 3/3.</text>
</comment>
<comment type="similarity">
    <text evidence="4">Belongs to the HAD-like hydrolase superfamily. SerB family.</text>
</comment>
<name>SERB_METJA</name>
<accession>Q58989</accession>
<gene>
    <name type="ordered locus">MJ1594</name>
</gene>
<dbReference type="EC" id="3.1.3.3" evidence="2 3"/>
<dbReference type="EMBL" id="L77117">
    <property type="protein sequence ID" value="AAB99612.1"/>
    <property type="molecule type" value="Genomic_DNA"/>
</dbReference>
<dbReference type="PIR" id="A64499">
    <property type="entry name" value="A64499"/>
</dbReference>
<dbReference type="RefSeq" id="WP_010871118.1">
    <property type="nucleotide sequence ID" value="NC_000909.1"/>
</dbReference>
<dbReference type="PDB" id="1F5S">
    <property type="method" value="X-ray"/>
    <property type="resolution" value="1.80 A"/>
    <property type="chains" value="A/B=1-211"/>
</dbReference>
<dbReference type="PDB" id="1J97">
    <property type="method" value="X-ray"/>
    <property type="resolution" value="1.50 A"/>
    <property type="chains" value="A/B=1-211"/>
</dbReference>
<dbReference type="PDB" id="1L7M">
    <property type="method" value="X-ray"/>
    <property type="resolution" value="1.48 A"/>
    <property type="chains" value="A/B=1-211"/>
</dbReference>
<dbReference type="PDB" id="1L7N">
    <property type="method" value="X-ray"/>
    <property type="resolution" value="1.80 A"/>
    <property type="chains" value="A/B=1-211"/>
</dbReference>
<dbReference type="PDB" id="1L7O">
    <property type="method" value="X-ray"/>
    <property type="resolution" value="2.20 A"/>
    <property type="chains" value="A/B=1-211"/>
</dbReference>
<dbReference type="PDB" id="1L7P">
    <property type="method" value="X-ray"/>
    <property type="resolution" value="1.90 A"/>
    <property type="chains" value="A/B=1-211"/>
</dbReference>
<dbReference type="PDBsum" id="1F5S"/>
<dbReference type="PDBsum" id="1J97"/>
<dbReference type="PDBsum" id="1L7M"/>
<dbReference type="PDBsum" id="1L7N"/>
<dbReference type="PDBsum" id="1L7O"/>
<dbReference type="PDBsum" id="1L7P"/>
<dbReference type="BMRB" id="Q58989"/>
<dbReference type="SMR" id="Q58989"/>
<dbReference type="FunCoup" id="Q58989">
    <property type="interactions" value="226"/>
</dbReference>
<dbReference type="STRING" id="243232.MJ_1594"/>
<dbReference type="PaxDb" id="243232-MJ_1594"/>
<dbReference type="EnsemblBacteria" id="AAB99612">
    <property type="protein sequence ID" value="AAB99612"/>
    <property type="gene ID" value="MJ_1594"/>
</dbReference>
<dbReference type="GeneID" id="1452502"/>
<dbReference type="KEGG" id="mja:MJ_1594"/>
<dbReference type="eggNOG" id="arCOG01158">
    <property type="taxonomic scope" value="Archaea"/>
</dbReference>
<dbReference type="HOGENOM" id="CLU_036368_4_3_2"/>
<dbReference type="InParanoid" id="Q58989"/>
<dbReference type="OrthoDB" id="10041at2157"/>
<dbReference type="PhylomeDB" id="Q58989"/>
<dbReference type="BRENDA" id="3.1.3.3">
    <property type="organism ID" value="3260"/>
</dbReference>
<dbReference type="UniPathway" id="UPA00135">
    <property type="reaction ID" value="UER00198"/>
</dbReference>
<dbReference type="EvolutionaryTrace" id="Q58989"/>
<dbReference type="Proteomes" id="UP000000805">
    <property type="component" value="Chromosome"/>
</dbReference>
<dbReference type="GO" id="GO:0005737">
    <property type="term" value="C:cytoplasm"/>
    <property type="evidence" value="ECO:0000318"/>
    <property type="project" value="GO_Central"/>
</dbReference>
<dbReference type="GO" id="GO:0036424">
    <property type="term" value="F:L-phosphoserine phosphatase activity"/>
    <property type="evidence" value="ECO:0000318"/>
    <property type="project" value="GO_Central"/>
</dbReference>
<dbReference type="GO" id="GO:0000287">
    <property type="term" value="F:magnesium ion binding"/>
    <property type="evidence" value="ECO:0000318"/>
    <property type="project" value="GO_Central"/>
</dbReference>
<dbReference type="GO" id="GO:0006564">
    <property type="term" value="P:L-serine biosynthetic process"/>
    <property type="evidence" value="ECO:0000318"/>
    <property type="project" value="GO_Central"/>
</dbReference>
<dbReference type="CDD" id="cd07500">
    <property type="entry name" value="HAD_PSP"/>
    <property type="match status" value="1"/>
</dbReference>
<dbReference type="FunFam" id="3.40.50.1000:FF:000236">
    <property type="entry name" value="Phosphoserine phosphatase"/>
    <property type="match status" value="1"/>
</dbReference>
<dbReference type="Gene3D" id="3.40.50.1000">
    <property type="entry name" value="HAD superfamily/HAD-like"/>
    <property type="match status" value="1"/>
</dbReference>
<dbReference type="InterPro" id="IPR050582">
    <property type="entry name" value="HAD-like_SerB"/>
</dbReference>
<dbReference type="InterPro" id="IPR036412">
    <property type="entry name" value="HAD-like_sf"/>
</dbReference>
<dbReference type="InterPro" id="IPR023214">
    <property type="entry name" value="HAD_sf"/>
</dbReference>
<dbReference type="InterPro" id="IPR004469">
    <property type="entry name" value="PSP"/>
</dbReference>
<dbReference type="NCBIfam" id="TIGR01488">
    <property type="entry name" value="HAD-SF-IB"/>
    <property type="match status" value="1"/>
</dbReference>
<dbReference type="NCBIfam" id="TIGR00338">
    <property type="entry name" value="serB"/>
    <property type="match status" value="1"/>
</dbReference>
<dbReference type="PANTHER" id="PTHR43344">
    <property type="entry name" value="PHOSPHOSERINE PHOSPHATASE"/>
    <property type="match status" value="1"/>
</dbReference>
<dbReference type="PANTHER" id="PTHR43344:SF2">
    <property type="entry name" value="PHOSPHOSERINE PHOSPHATASE"/>
    <property type="match status" value="1"/>
</dbReference>
<dbReference type="Pfam" id="PF00702">
    <property type="entry name" value="Hydrolase"/>
    <property type="match status" value="1"/>
</dbReference>
<dbReference type="SFLD" id="SFLDG01129">
    <property type="entry name" value="C1.5:_HAD__Beta-PGM__Phosphata"/>
    <property type="match status" value="1"/>
</dbReference>
<dbReference type="SFLD" id="SFLDS00003">
    <property type="entry name" value="Haloacid_Dehalogenase"/>
    <property type="match status" value="1"/>
</dbReference>
<dbReference type="SFLD" id="SFLDF00029">
    <property type="entry name" value="phosphoserine_phosphatase"/>
    <property type="match status" value="1"/>
</dbReference>
<dbReference type="SUPFAM" id="SSF56784">
    <property type="entry name" value="HAD-like"/>
    <property type="match status" value="1"/>
</dbReference>
<sequence>MEKKKKLILFDFDSTLVNNETIDEIAREAGVEEEVKKITKEAMEGKLNFEQSLRKRVSLLKDLPIEKVEKAIKRITPTEGAEETIKELKNRGYVVAVVSGGFDIAVNKIKEKLGLDYAFANRLIVKDGKLTGDVEGEVLKENAKGEILEKIAKIEGINLEDTVAVGDGANDISMFKKAGLKIAFCAKPILKEKADICIEKRDLREILKYIK</sequence>
<keyword id="KW-0002">3D-structure</keyword>
<keyword id="KW-0028">Amino-acid biosynthesis</keyword>
<keyword id="KW-0378">Hydrolase</keyword>
<keyword id="KW-0460">Magnesium</keyword>
<keyword id="KW-0479">Metal-binding</keyword>
<keyword id="KW-1185">Reference proteome</keyword>
<keyword id="KW-0718">Serine biosynthesis</keyword>
<organism>
    <name type="scientific">Methanocaldococcus jannaschii (strain ATCC 43067 / DSM 2661 / JAL-1 / JCM 10045 / NBRC 100440)</name>
    <name type="common">Methanococcus jannaschii</name>
    <dbReference type="NCBI Taxonomy" id="243232"/>
    <lineage>
        <taxon>Archaea</taxon>
        <taxon>Methanobacteriati</taxon>
        <taxon>Methanobacteriota</taxon>
        <taxon>Methanomada group</taxon>
        <taxon>Methanococci</taxon>
        <taxon>Methanococcales</taxon>
        <taxon>Methanocaldococcaceae</taxon>
        <taxon>Methanocaldococcus</taxon>
    </lineage>
</organism>